<sequence length="131" mass="14870">MDTTTSNPRIEASAKYIRMSPHKARRVVDQIRGRAYEQAPMILEFMPYRVCDSISQLLSSAAANANHNFGLSKTDLFIDAIQVDGGSFLKRIRSGARGRTYPIHKPTCHITIVMRMDSGWRNKISLRRFGK</sequence>
<feature type="chain" id="PRO_0000354554" description="Large ribosomal subunit protein uL22c">
    <location>
        <begin position="1"/>
        <end position="131"/>
    </location>
</feature>
<organism>
    <name type="scientific">Aneura mirabilis</name>
    <name type="common">Parasitic liverwort</name>
    <name type="synonym">Cryptothallus mirabilis</name>
    <dbReference type="NCBI Taxonomy" id="280810"/>
    <lineage>
        <taxon>Eukaryota</taxon>
        <taxon>Viridiplantae</taxon>
        <taxon>Streptophyta</taxon>
        <taxon>Embryophyta</taxon>
        <taxon>Marchantiophyta</taxon>
        <taxon>Jungermanniopsida</taxon>
        <taxon>Metzgeriidae</taxon>
        <taxon>Metzgeriales</taxon>
        <taxon>Aneuraceae</taxon>
        <taxon>Aneura</taxon>
    </lineage>
</organism>
<accession>B0YPR5</accession>
<keyword id="KW-0934">Plastid</keyword>
<keyword id="KW-0687">Ribonucleoprotein</keyword>
<keyword id="KW-0689">Ribosomal protein</keyword>
<keyword id="KW-0694">RNA-binding</keyword>
<keyword id="KW-0699">rRNA-binding</keyword>
<reference key="1">
    <citation type="journal article" date="2008" name="Mol. Biol. Evol.">
        <title>Functional gene losses occur with minimal size reduction in the plastid genome of the parasitic liverwort Aneura mirabilis.</title>
        <authorList>
            <person name="Wickett N.J."/>
            <person name="Zhang Y."/>
            <person name="Hansen S.K."/>
            <person name="Roper J.M."/>
            <person name="Kuehl J.V."/>
            <person name="Plock S.A."/>
            <person name="Wolf P.G."/>
            <person name="dePamphilis C.W."/>
            <person name="Boore J.L."/>
            <person name="Goffinet B."/>
        </authorList>
    </citation>
    <scope>NUCLEOTIDE SEQUENCE [LARGE SCALE GENOMIC DNA]</scope>
</reference>
<proteinExistence type="inferred from homology"/>
<name>RK22_ANEMR</name>
<geneLocation type="non-photosynthetic plastid"/>
<dbReference type="EMBL" id="EU043314">
    <property type="protein sequence ID" value="ABS54513.1"/>
    <property type="molecule type" value="Genomic_DNA"/>
</dbReference>
<dbReference type="RefSeq" id="YP_001687251.1">
    <property type="nucleotide sequence ID" value="NC_010359.1"/>
</dbReference>
<dbReference type="SMR" id="B0YPR5"/>
<dbReference type="GeneID" id="5952188"/>
<dbReference type="GO" id="GO:0015934">
    <property type="term" value="C:large ribosomal subunit"/>
    <property type="evidence" value="ECO:0007669"/>
    <property type="project" value="InterPro"/>
</dbReference>
<dbReference type="GO" id="GO:0009536">
    <property type="term" value="C:plastid"/>
    <property type="evidence" value="ECO:0007669"/>
    <property type="project" value="UniProtKB-SubCell"/>
</dbReference>
<dbReference type="GO" id="GO:0019843">
    <property type="term" value="F:rRNA binding"/>
    <property type="evidence" value="ECO:0007669"/>
    <property type="project" value="UniProtKB-KW"/>
</dbReference>
<dbReference type="GO" id="GO:0003735">
    <property type="term" value="F:structural constituent of ribosome"/>
    <property type="evidence" value="ECO:0007669"/>
    <property type="project" value="InterPro"/>
</dbReference>
<dbReference type="GO" id="GO:0006412">
    <property type="term" value="P:translation"/>
    <property type="evidence" value="ECO:0007669"/>
    <property type="project" value="InterPro"/>
</dbReference>
<dbReference type="CDD" id="cd00336">
    <property type="entry name" value="Ribosomal_L22"/>
    <property type="match status" value="1"/>
</dbReference>
<dbReference type="Gene3D" id="3.90.470.10">
    <property type="entry name" value="Ribosomal protein L22/L17"/>
    <property type="match status" value="1"/>
</dbReference>
<dbReference type="HAMAP" id="MF_01331_B">
    <property type="entry name" value="Ribosomal_uL22_B"/>
    <property type="match status" value="1"/>
</dbReference>
<dbReference type="InterPro" id="IPR001063">
    <property type="entry name" value="Ribosomal_uL22"/>
</dbReference>
<dbReference type="InterPro" id="IPR005727">
    <property type="entry name" value="Ribosomal_uL22_bac/chlpt-type"/>
</dbReference>
<dbReference type="InterPro" id="IPR047867">
    <property type="entry name" value="Ribosomal_uL22_bac/org-type"/>
</dbReference>
<dbReference type="InterPro" id="IPR036394">
    <property type="entry name" value="Ribosomal_uL22_sf"/>
</dbReference>
<dbReference type="NCBIfam" id="TIGR01044">
    <property type="entry name" value="rplV_bact"/>
    <property type="match status" value="1"/>
</dbReference>
<dbReference type="PANTHER" id="PTHR13501">
    <property type="entry name" value="CHLOROPLAST 50S RIBOSOMAL PROTEIN L22-RELATED"/>
    <property type="match status" value="1"/>
</dbReference>
<dbReference type="PANTHER" id="PTHR13501:SF10">
    <property type="entry name" value="LARGE RIBOSOMAL SUBUNIT PROTEIN UL22M"/>
    <property type="match status" value="1"/>
</dbReference>
<dbReference type="Pfam" id="PF00237">
    <property type="entry name" value="Ribosomal_L22"/>
    <property type="match status" value="1"/>
</dbReference>
<dbReference type="SUPFAM" id="SSF54843">
    <property type="entry name" value="Ribosomal protein L22"/>
    <property type="match status" value="1"/>
</dbReference>
<gene>
    <name type="primary">rpl22</name>
</gene>
<protein>
    <recommendedName>
        <fullName evidence="2">Large ribosomal subunit protein uL22c</fullName>
    </recommendedName>
    <alternativeName>
        <fullName>50S ribosomal protein L22, plastid</fullName>
    </alternativeName>
</protein>
<comment type="function">
    <text evidence="1">This protein binds specifically to 23S rRNA.</text>
</comment>
<comment type="function">
    <text evidence="1">The globular domain of the protein is located near the polypeptide exit tunnel on the outside of the subunit, while an extended beta-hairpin is found that lines the wall of the exit tunnel in the center of the 70S ribosome.</text>
</comment>
<comment type="subunit">
    <text evidence="1">Part of the 50S ribosomal subunit.</text>
</comment>
<comment type="subcellular location">
    <subcellularLocation>
        <location>Plastid</location>
    </subcellularLocation>
</comment>
<comment type="similarity">
    <text evidence="2">Belongs to the universal ribosomal protein uL22 family.</text>
</comment>
<evidence type="ECO:0000250" key="1"/>
<evidence type="ECO:0000305" key="2"/>